<feature type="chain" id="PRO_0000223137" description="UPF0328 protein ECU08_2080">
    <location>
        <begin position="1"/>
        <end position="276"/>
    </location>
</feature>
<feature type="region of interest" description="Disordered" evidence="1">
    <location>
        <begin position="1"/>
        <end position="24"/>
    </location>
</feature>
<sequence length="276" mass="30301">MGIIDVQRSHLTATPSKERDAPAHPPPTILPVCILFPYTSIALPVLMYYIPEKGQFDQNPFLKLIAILPPCLYSAVQFPLLFLGNPESSCTPRPALYATLYLLLDASLLAFSAISILSIAAFTTTEWNSDEVVAVCSTLLPSLLVLPAHLLSTSCALTPGSIGFTDSSVDILIDLLMVSLLAAGLTLNVDESWRFFPYICISSLVLVLAKLLRKSSSMPRRDPAPAPAWRIAAFVLIFGLSMFVYFSILHECLLIFGNHFPWFPSQAPSNDLTNKW</sequence>
<accession>Q8SUH8</accession>
<comment type="similarity">
    <text evidence="2">Belongs to the UPF0328 family.</text>
</comment>
<keyword id="KW-1185">Reference proteome</keyword>
<name>Y808_ENCCU</name>
<dbReference type="EMBL" id="AL590448">
    <property type="protein sequence ID" value="CAD26510.1"/>
    <property type="molecule type" value="Genomic_DNA"/>
</dbReference>
<dbReference type="RefSeq" id="NP_597334.1">
    <property type="nucleotide sequence ID" value="NM_001041943.1"/>
</dbReference>
<dbReference type="GeneID" id="859756"/>
<dbReference type="KEGG" id="ecu:ECU08_2080"/>
<dbReference type="VEuPathDB" id="MicrosporidiaDB:ECU08_2080"/>
<dbReference type="HOGENOM" id="CLU_059413_0_0_1"/>
<dbReference type="InParanoid" id="Q8SUH8"/>
<dbReference type="Proteomes" id="UP000000819">
    <property type="component" value="Chromosome VIII"/>
</dbReference>
<dbReference type="InterPro" id="IPR019081">
    <property type="entry name" value="UPF0328"/>
</dbReference>
<dbReference type="Pfam" id="PF09591">
    <property type="entry name" value="DUF2463"/>
    <property type="match status" value="1"/>
</dbReference>
<reference key="1">
    <citation type="journal article" date="2001" name="Nature">
        <title>Genome sequence and gene compaction of the eukaryote parasite Encephalitozoon cuniculi.</title>
        <authorList>
            <person name="Katinka M.D."/>
            <person name="Duprat S."/>
            <person name="Cornillot E."/>
            <person name="Metenier G."/>
            <person name="Thomarat F."/>
            <person name="Prensier G."/>
            <person name="Barbe V."/>
            <person name="Peyretaillade E."/>
            <person name="Brottier P."/>
            <person name="Wincker P."/>
            <person name="Delbac F."/>
            <person name="El Alaoui H."/>
            <person name="Peyret P."/>
            <person name="Saurin W."/>
            <person name="Gouy M."/>
            <person name="Weissenbach J."/>
            <person name="Vivares C.P."/>
        </authorList>
    </citation>
    <scope>NUCLEOTIDE SEQUENCE [LARGE SCALE GENOMIC DNA]</scope>
    <source>
        <strain>GB-M1</strain>
    </source>
</reference>
<gene>
    <name type="ordered locus">ECU08_2080</name>
</gene>
<protein>
    <recommendedName>
        <fullName>UPF0328 protein ECU08_2080</fullName>
    </recommendedName>
</protein>
<evidence type="ECO:0000256" key="1">
    <source>
        <dbReference type="SAM" id="MobiDB-lite"/>
    </source>
</evidence>
<evidence type="ECO:0000305" key="2"/>
<organism>
    <name type="scientific">Encephalitozoon cuniculi (strain GB-M1)</name>
    <name type="common">Microsporidian parasite</name>
    <dbReference type="NCBI Taxonomy" id="284813"/>
    <lineage>
        <taxon>Eukaryota</taxon>
        <taxon>Fungi</taxon>
        <taxon>Fungi incertae sedis</taxon>
        <taxon>Microsporidia</taxon>
        <taxon>Unikaryonidae</taxon>
        <taxon>Encephalitozoon</taxon>
    </lineage>
</organism>
<proteinExistence type="inferred from homology"/>